<comment type="function">
    <text evidence="1">An essential GTPase which binds GTP, GDP and possibly (p)ppGpp with moderate affinity, with high nucleotide exchange rates and a fairly low GTP hydrolysis rate. Plays a role in control of the cell cycle, stress response, ribosome biogenesis and in those bacteria that undergo differentiation, in morphogenesis control.</text>
</comment>
<comment type="cofactor">
    <cofactor evidence="1">
        <name>Mg(2+)</name>
        <dbReference type="ChEBI" id="CHEBI:18420"/>
    </cofactor>
</comment>
<comment type="subunit">
    <text evidence="1">Monomer.</text>
</comment>
<comment type="subcellular location">
    <subcellularLocation>
        <location evidence="1">Cytoplasm</location>
    </subcellularLocation>
</comment>
<comment type="similarity">
    <text evidence="1">Belongs to the TRAFAC class OBG-HflX-like GTPase superfamily. OBG GTPase family.</text>
</comment>
<gene>
    <name evidence="1" type="primary">obg</name>
    <name type="ordered locus">Ldb0817</name>
</gene>
<keyword id="KW-0963">Cytoplasm</keyword>
<keyword id="KW-0342">GTP-binding</keyword>
<keyword id="KW-0378">Hydrolase</keyword>
<keyword id="KW-0460">Magnesium</keyword>
<keyword id="KW-0479">Metal-binding</keyword>
<keyword id="KW-0547">Nucleotide-binding</keyword>
<keyword id="KW-1185">Reference proteome</keyword>
<evidence type="ECO:0000255" key="1">
    <source>
        <dbReference type="HAMAP-Rule" id="MF_01454"/>
    </source>
</evidence>
<evidence type="ECO:0000255" key="2">
    <source>
        <dbReference type="PROSITE-ProRule" id="PRU01229"/>
    </source>
</evidence>
<evidence type="ECO:0000255" key="3">
    <source>
        <dbReference type="PROSITE-ProRule" id="PRU01231"/>
    </source>
</evidence>
<organism>
    <name type="scientific">Lactobacillus delbrueckii subsp. bulgaricus (strain ATCC 11842 / DSM 20081 / BCRC 10696 / JCM 1002 / NBRC 13953 / NCIMB 11778 / NCTC 12712 / WDCM 00102 / Lb 14)</name>
    <dbReference type="NCBI Taxonomy" id="390333"/>
    <lineage>
        <taxon>Bacteria</taxon>
        <taxon>Bacillati</taxon>
        <taxon>Bacillota</taxon>
        <taxon>Bacilli</taxon>
        <taxon>Lactobacillales</taxon>
        <taxon>Lactobacillaceae</taxon>
        <taxon>Lactobacillus</taxon>
    </lineage>
</organism>
<proteinExistence type="inferred from homology"/>
<protein>
    <recommendedName>
        <fullName evidence="1">GTPase Obg</fullName>
        <ecNumber evidence="1">3.6.5.-</ecNumber>
    </recommendedName>
    <alternativeName>
        <fullName evidence="1">GTP-binding protein Obg</fullName>
    </alternativeName>
</protein>
<feature type="chain" id="PRO_0000385993" description="GTPase Obg">
    <location>
        <begin position="1"/>
        <end position="440"/>
    </location>
</feature>
<feature type="domain" description="Obg" evidence="3">
    <location>
        <begin position="5"/>
        <end position="163"/>
    </location>
</feature>
<feature type="domain" description="OBG-type G" evidence="1">
    <location>
        <begin position="164"/>
        <end position="338"/>
    </location>
</feature>
<feature type="domain" description="OCT" evidence="2">
    <location>
        <begin position="362"/>
        <end position="440"/>
    </location>
</feature>
<feature type="binding site" evidence="1">
    <location>
        <begin position="170"/>
        <end position="177"/>
    </location>
    <ligand>
        <name>GTP</name>
        <dbReference type="ChEBI" id="CHEBI:37565"/>
    </ligand>
</feature>
<feature type="binding site" evidence="1">
    <location>
        <position position="177"/>
    </location>
    <ligand>
        <name>Mg(2+)</name>
        <dbReference type="ChEBI" id="CHEBI:18420"/>
    </ligand>
</feature>
<feature type="binding site" evidence="1">
    <location>
        <begin position="195"/>
        <end position="199"/>
    </location>
    <ligand>
        <name>GTP</name>
        <dbReference type="ChEBI" id="CHEBI:37565"/>
    </ligand>
</feature>
<feature type="binding site" evidence="1">
    <location>
        <position position="197"/>
    </location>
    <ligand>
        <name>Mg(2+)</name>
        <dbReference type="ChEBI" id="CHEBI:18420"/>
    </ligand>
</feature>
<feature type="binding site" evidence="1">
    <location>
        <begin position="217"/>
        <end position="220"/>
    </location>
    <ligand>
        <name>GTP</name>
        <dbReference type="ChEBI" id="CHEBI:37565"/>
    </ligand>
</feature>
<feature type="binding site" evidence="1">
    <location>
        <begin position="288"/>
        <end position="291"/>
    </location>
    <ligand>
        <name>GTP</name>
        <dbReference type="ChEBI" id="CHEBI:37565"/>
    </ligand>
</feature>
<feature type="binding site" evidence="1">
    <location>
        <begin position="319"/>
        <end position="321"/>
    </location>
    <ligand>
        <name>GTP</name>
        <dbReference type="ChEBI" id="CHEBI:37565"/>
    </ligand>
</feature>
<dbReference type="EC" id="3.6.5.-" evidence="1"/>
<dbReference type="EMBL" id="CR954253">
    <property type="protein sequence ID" value="CAI97639.1"/>
    <property type="molecule type" value="Genomic_DNA"/>
</dbReference>
<dbReference type="RefSeq" id="WP_011543802.1">
    <property type="nucleotide sequence ID" value="NC_008054.1"/>
</dbReference>
<dbReference type="SMR" id="Q1GAM3"/>
<dbReference type="STRING" id="390333.Ldb0817"/>
<dbReference type="KEGG" id="ldb:Ldb0817"/>
<dbReference type="PATRIC" id="fig|390333.13.peg.894"/>
<dbReference type="eggNOG" id="COG0536">
    <property type="taxonomic scope" value="Bacteria"/>
</dbReference>
<dbReference type="HOGENOM" id="CLU_011747_2_1_9"/>
<dbReference type="BioCyc" id="LDEL390333:LDB_RS03595-MONOMER"/>
<dbReference type="Proteomes" id="UP000001259">
    <property type="component" value="Chromosome"/>
</dbReference>
<dbReference type="GO" id="GO:0005737">
    <property type="term" value="C:cytoplasm"/>
    <property type="evidence" value="ECO:0007669"/>
    <property type="project" value="UniProtKB-SubCell"/>
</dbReference>
<dbReference type="GO" id="GO:0005525">
    <property type="term" value="F:GTP binding"/>
    <property type="evidence" value="ECO:0007669"/>
    <property type="project" value="UniProtKB-UniRule"/>
</dbReference>
<dbReference type="GO" id="GO:0003924">
    <property type="term" value="F:GTPase activity"/>
    <property type="evidence" value="ECO:0007669"/>
    <property type="project" value="UniProtKB-UniRule"/>
</dbReference>
<dbReference type="GO" id="GO:0000287">
    <property type="term" value="F:magnesium ion binding"/>
    <property type="evidence" value="ECO:0007669"/>
    <property type="project" value="InterPro"/>
</dbReference>
<dbReference type="GO" id="GO:0042254">
    <property type="term" value="P:ribosome biogenesis"/>
    <property type="evidence" value="ECO:0007669"/>
    <property type="project" value="UniProtKB-UniRule"/>
</dbReference>
<dbReference type="CDD" id="cd01898">
    <property type="entry name" value="Obg"/>
    <property type="match status" value="1"/>
</dbReference>
<dbReference type="FunFam" id="2.70.210.12:FF:000001">
    <property type="entry name" value="GTPase Obg"/>
    <property type="match status" value="1"/>
</dbReference>
<dbReference type="Gene3D" id="3.30.300.350">
    <property type="entry name" value="GTP-binding protein OBG, C-terminal domain"/>
    <property type="match status" value="1"/>
</dbReference>
<dbReference type="Gene3D" id="2.70.210.12">
    <property type="entry name" value="GTP1/OBG domain"/>
    <property type="match status" value="1"/>
</dbReference>
<dbReference type="Gene3D" id="3.40.50.300">
    <property type="entry name" value="P-loop containing nucleotide triphosphate hydrolases"/>
    <property type="match status" value="1"/>
</dbReference>
<dbReference type="HAMAP" id="MF_01454">
    <property type="entry name" value="GTPase_Obg"/>
    <property type="match status" value="1"/>
</dbReference>
<dbReference type="InterPro" id="IPR031167">
    <property type="entry name" value="G_OBG"/>
</dbReference>
<dbReference type="InterPro" id="IPR006073">
    <property type="entry name" value="GTP-bd"/>
</dbReference>
<dbReference type="InterPro" id="IPR014100">
    <property type="entry name" value="GTP-bd_Obg/CgtA"/>
</dbReference>
<dbReference type="InterPro" id="IPR036346">
    <property type="entry name" value="GTP-bd_prot_GTP1/OBG_C_sf"/>
</dbReference>
<dbReference type="InterPro" id="IPR006074">
    <property type="entry name" value="GTP1-OBG_CS"/>
</dbReference>
<dbReference type="InterPro" id="IPR006169">
    <property type="entry name" value="GTP1_OBG_dom"/>
</dbReference>
<dbReference type="InterPro" id="IPR036726">
    <property type="entry name" value="GTP1_OBG_dom_sf"/>
</dbReference>
<dbReference type="InterPro" id="IPR045086">
    <property type="entry name" value="OBG_GTPase"/>
</dbReference>
<dbReference type="InterPro" id="IPR015349">
    <property type="entry name" value="OCT_dom"/>
</dbReference>
<dbReference type="InterPro" id="IPR027417">
    <property type="entry name" value="P-loop_NTPase"/>
</dbReference>
<dbReference type="NCBIfam" id="TIGR02729">
    <property type="entry name" value="Obg_CgtA"/>
    <property type="match status" value="1"/>
</dbReference>
<dbReference type="NCBIfam" id="TIGR03595">
    <property type="entry name" value="Obg_CgtA_exten"/>
    <property type="match status" value="1"/>
</dbReference>
<dbReference type="NCBIfam" id="NF008954">
    <property type="entry name" value="PRK12296.1"/>
    <property type="match status" value="1"/>
</dbReference>
<dbReference type="NCBIfam" id="NF008955">
    <property type="entry name" value="PRK12297.1"/>
    <property type="match status" value="1"/>
</dbReference>
<dbReference type="NCBIfam" id="NF008956">
    <property type="entry name" value="PRK12299.1"/>
    <property type="match status" value="1"/>
</dbReference>
<dbReference type="PANTHER" id="PTHR11702">
    <property type="entry name" value="DEVELOPMENTALLY REGULATED GTP-BINDING PROTEIN-RELATED"/>
    <property type="match status" value="1"/>
</dbReference>
<dbReference type="PANTHER" id="PTHR11702:SF31">
    <property type="entry name" value="MITOCHONDRIAL RIBOSOME-ASSOCIATED GTPASE 2"/>
    <property type="match status" value="1"/>
</dbReference>
<dbReference type="Pfam" id="PF09269">
    <property type="entry name" value="DUF1967"/>
    <property type="match status" value="1"/>
</dbReference>
<dbReference type="Pfam" id="PF01018">
    <property type="entry name" value="GTP1_OBG"/>
    <property type="match status" value="1"/>
</dbReference>
<dbReference type="Pfam" id="PF01926">
    <property type="entry name" value="MMR_HSR1"/>
    <property type="match status" value="1"/>
</dbReference>
<dbReference type="PIRSF" id="PIRSF002401">
    <property type="entry name" value="GTP_bd_Obg/CgtA"/>
    <property type="match status" value="1"/>
</dbReference>
<dbReference type="PRINTS" id="PR00326">
    <property type="entry name" value="GTP1OBG"/>
</dbReference>
<dbReference type="SUPFAM" id="SSF102741">
    <property type="entry name" value="Obg GTP-binding protein C-terminal domain"/>
    <property type="match status" value="1"/>
</dbReference>
<dbReference type="SUPFAM" id="SSF82051">
    <property type="entry name" value="Obg GTP-binding protein N-terminal domain"/>
    <property type="match status" value="1"/>
</dbReference>
<dbReference type="SUPFAM" id="SSF52540">
    <property type="entry name" value="P-loop containing nucleoside triphosphate hydrolases"/>
    <property type="match status" value="1"/>
</dbReference>
<dbReference type="PROSITE" id="PS51710">
    <property type="entry name" value="G_OBG"/>
    <property type="match status" value="1"/>
</dbReference>
<dbReference type="PROSITE" id="PS00905">
    <property type="entry name" value="GTP1_OBG"/>
    <property type="match status" value="1"/>
</dbReference>
<dbReference type="PROSITE" id="PS51883">
    <property type="entry name" value="OBG"/>
    <property type="match status" value="1"/>
</dbReference>
<dbReference type="PROSITE" id="PS51881">
    <property type="entry name" value="OCT"/>
    <property type="match status" value="1"/>
</dbReference>
<sequence>MPTPSTFVDQTKIEVQAGKGGDGMVAFRHEKFMPNGGPAGGDGGRGGSIIFVADNGLRTLMDFRYRRKFKAEPGENGRIKAQYGKAAKDLYLKVPVGTTVYDFFTGEEIGDLVENGQELVVAKGGRGGRGNIHFATSVNTAPEIAENGEPGEFRTLRLELKVLADVGLVGFPSVGKSTLLSVVTSAKPKIAAYQFTTLKPNLGMVLLPDGRDFSMADLPGLIKGASQGVGLGIQFLRHVERTKVILHMVSMDPNNGRDAYEDYETILHELASYTEDDLSSKREIIVASQMDIPGADEKLAQFKKDLAAHGVDQEVYELSSVTHQGVDRLMSRAADLVSEVEAQEAEAAVKPKEEVKTKTYKYHRPEKMEFTVEKLADHEFEIHGEQLERLVAMTNLDHQDGIMRLARRLKRMGVDDELRAQGAVDGDDVYIGDFSFEFVQ</sequence>
<accession>Q1GAM3</accession>
<reference key="1">
    <citation type="journal article" date="2006" name="Proc. Natl. Acad. Sci. U.S.A.">
        <title>The complete genome sequence of Lactobacillus bulgaricus reveals extensive and ongoing reductive evolution.</title>
        <authorList>
            <person name="van de Guchte M."/>
            <person name="Penaud S."/>
            <person name="Grimaldi C."/>
            <person name="Barbe V."/>
            <person name="Bryson K."/>
            <person name="Nicolas P."/>
            <person name="Robert C."/>
            <person name="Oztas S."/>
            <person name="Mangenot S."/>
            <person name="Couloux A."/>
            <person name="Loux V."/>
            <person name="Dervyn R."/>
            <person name="Bossy R."/>
            <person name="Bolotin A."/>
            <person name="Batto J.-M."/>
            <person name="Walunas T."/>
            <person name="Gibrat J.-F."/>
            <person name="Bessieres P."/>
            <person name="Weissenbach J."/>
            <person name="Ehrlich S.D."/>
            <person name="Maguin E."/>
        </authorList>
    </citation>
    <scope>NUCLEOTIDE SEQUENCE [LARGE SCALE GENOMIC DNA]</scope>
    <source>
        <strain>ATCC 11842 / DSM 20081 / BCRC 10696 / JCM 1002 / NBRC 13953 / NCIMB 11778 / NCTC 12712 / WDCM 00102 / Lb 14</strain>
    </source>
</reference>
<name>OBG_LACDA</name>